<name>HCYB_SCUCO</name>
<reference evidence="3" key="1">
    <citation type="journal article" date="2003" name="Eur. J. Biochem.">
        <title>Complete subunit sequences, structure and evolution of the 6 x 6-mer hemocyanin from the common house centipede, Scutigera coleoptrata.</title>
        <authorList>
            <person name="Kusche K."/>
            <person name="Hembach A."/>
            <person name="Hagner-Holler S."/>
            <person name="Gebauer W."/>
            <person name="Burmester T."/>
        </authorList>
    </citation>
    <scope>NUCLEOTIDE SEQUENCE [MRNA]</scope>
    <scope>PROTEIN SEQUENCE OF 19-36</scope>
    <scope>SUBUNIT</scope>
    <scope>SUBCELLULAR LOCATION</scope>
    <scope>TISSUE SPECIFICITY</scope>
    <source>
        <tissue evidence="2">Hemolymph</tissue>
    </source>
</reference>
<gene>
    <name type="primary">HCB</name>
</gene>
<proteinExistence type="evidence at protein level"/>
<dbReference type="EMBL" id="AJ512793">
    <property type="protein sequence ID" value="CAD55132.1"/>
    <property type="molecule type" value="mRNA"/>
</dbReference>
<dbReference type="SMR" id="Q8IFJ8"/>
<dbReference type="GlyCosmos" id="Q8IFJ8">
    <property type="glycosylation" value="1 site, No reported glycans"/>
</dbReference>
<dbReference type="GO" id="GO:0005576">
    <property type="term" value="C:extracellular region"/>
    <property type="evidence" value="ECO:0000314"/>
    <property type="project" value="UniProtKB"/>
</dbReference>
<dbReference type="GO" id="GO:0046872">
    <property type="term" value="F:metal ion binding"/>
    <property type="evidence" value="ECO:0007669"/>
    <property type="project" value="UniProtKB-KW"/>
</dbReference>
<dbReference type="GO" id="GO:0016491">
    <property type="term" value="F:oxidoreductase activity"/>
    <property type="evidence" value="ECO:0007669"/>
    <property type="project" value="InterPro"/>
</dbReference>
<dbReference type="GO" id="GO:0005344">
    <property type="term" value="F:oxygen carrier activity"/>
    <property type="evidence" value="ECO:0007669"/>
    <property type="project" value="UniProtKB-KW"/>
</dbReference>
<dbReference type="FunFam" id="1.10.1280.10:FF:000004">
    <property type="entry name" value="Hemocyanin subunit 2"/>
    <property type="match status" value="1"/>
</dbReference>
<dbReference type="FunFam" id="2.60.40.1520:FF:000001">
    <property type="entry name" value="Hemocyanin subunit 2"/>
    <property type="match status" value="1"/>
</dbReference>
<dbReference type="Gene3D" id="1.10.1280.10">
    <property type="entry name" value="Di-copper center containing domain from catechol oxidase"/>
    <property type="match status" value="1"/>
</dbReference>
<dbReference type="Gene3D" id="2.60.40.1520">
    <property type="entry name" value="Hemocyanin, C-terminal domain"/>
    <property type="match status" value="1"/>
</dbReference>
<dbReference type="Gene3D" id="1.20.1370.10">
    <property type="entry name" value="Hemocyanin, N-terminal domain"/>
    <property type="match status" value="1"/>
</dbReference>
<dbReference type="InterPro" id="IPR008922">
    <property type="entry name" value="Di-copper_centre_dom_sf"/>
</dbReference>
<dbReference type="InterPro" id="IPR013788">
    <property type="entry name" value="Hemocyanin/hexamerin"/>
</dbReference>
<dbReference type="InterPro" id="IPR000896">
    <property type="entry name" value="Hemocyanin/hexamerin_mid_dom"/>
</dbReference>
<dbReference type="InterPro" id="IPR005203">
    <property type="entry name" value="Hemocyanin_C"/>
</dbReference>
<dbReference type="InterPro" id="IPR037020">
    <property type="entry name" value="Hemocyanin_C_sf"/>
</dbReference>
<dbReference type="InterPro" id="IPR005204">
    <property type="entry name" value="Hemocyanin_N"/>
</dbReference>
<dbReference type="InterPro" id="IPR036697">
    <property type="entry name" value="Hemocyanin_N_sf"/>
</dbReference>
<dbReference type="InterPro" id="IPR014756">
    <property type="entry name" value="Ig_E-set"/>
</dbReference>
<dbReference type="InterPro" id="IPR002227">
    <property type="entry name" value="Tyrosinase_Cu-bd"/>
</dbReference>
<dbReference type="PANTHER" id="PTHR11511">
    <property type="entry name" value="LARVAL STORAGE PROTEIN/PHENOLOXIDASE"/>
    <property type="match status" value="1"/>
</dbReference>
<dbReference type="PANTHER" id="PTHR11511:SF4">
    <property type="entry name" value="PHENOLOXIDASE 2-RELATED"/>
    <property type="match status" value="1"/>
</dbReference>
<dbReference type="Pfam" id="PF03723">
    <property type="entry name" value="Hemocyanin_C"/>
    <property type="match status" value="1"/>
</dbReference>
<dbReference type="Pfam" id="PF00372">
    <property type="entry name" value="Hemocyanin_M"/>
    <property type="match status" value="1"/>
</dbReference>
<dbReference type="Pfam" id="PF03722">
    <property type="entry name" value="Hemocyanin_N"/>
    <property type="match status" value="1"/>
</dbReference>
<dbReference type="PRINTS" id="PR00187">
    <property type="entry name" value="HAEMOCYANIN"/>
</dbReference>
<dbReference type="SUPFAM" id="SSF48056">
    <property type="entry name" value="Di-copper centre-containing domain"/>
    <property type="match status" value="1"/>
</dbReference>
<dbReference type="SUPFAM" id="SSF81296">
    <property type="entry name" value="E set domains"/>
    <property type="match status" value="1"/>
</dbReference>
<dbReference type="SUPFAM" id="SSF48050">
    <property type="entry name" value="Hemocyanin, N-terminal domain"/>
    <property type="match status" value="1"/>
</dbReference>
<dbReference type="PROSITE" id="PS00209">
    <property type="entry name" value="HEMOCYANIN_1"/>
    <property type="match status" value="1"/>
</dbReference>
<dbReference type="PROSITE" id="PS00210">
    <property type="entry name" value="HEMOCYANIN_2"/>
    <property type="match status" value="1"/>
</dbReference>
<dbReference type="PROSITE" id="PS00498">
    <property type="entry name" value="TYROSINASE_2"/>
    <property type="match status" value="1"/>
</dbReference>
<comment type="function">
    <text evidence="3">Hemocyanins are copper-containing oxygen carriers occurring freely dissolved in the hemolymph of many mollusks and arthropods.</text>
</comment>
<comment type="subunit">
    <text evidence="2">36-chain polymer consisting of 6 hexamers, each of which includes 4 different chains, A, B, C and D.</text>
</comment>
<comment type="subcellular location">
    <subcellularLocation>
        <location evidence="2">Secreted</location>
        <location evidence="2">Extracellular space</location>
    </subcellularLocation>
</comment>
<comment type="tissue specificity">
    <text evidence="2">Hemolymph.</text>
</comment>
<comment type="similarity">
    <text evidence="3">Belongs to the tyrosinase family. Hemocyanin subfamily.</text>
</comment>
<comment type="caution">
    <text evidence="3">PubMed:12823556 conflicts between the peptide sequence obtained by Edman degradation and that obtained from the cDNA sequence may be due to contamination of the peptide sample with hemocyanin D.</text>
</comment>
<feature type="signal peptide" evidence="2">
    <location>
        <begin position="1"/>
        <end position="18"/>
    </location>
</feature>
<feature type="chain" id="PRO_0000013346" description="Hemocyanin subunit B">
    <location>
        <begin position="19"/>
        <end position="659"/>
    </location>
</feature>
<feature type="binding site" evidence="1">
    <location>
        <position position="198"/>
    </location>
    <ligand>
        <name>Cu cation</name>
        <dbReference type="ChEBI" id="CHEBI:23378"/>
        <label>A</label>
    </ligand>
</feature>
<feature type="binding site" evidence="1">
    <location>
        <position position="202"/>
    </location>
    <ligand>
        <name>Cu cation</name>
        <dbReference type="ChEBI" id="CHEBI:23378"/>
        <label>A</label>
    </ligand>
</feature>
<feature type="binding site" evidence="1">
    <location>
        <position position="232"/>
    </location>
    <ligand>
        <name>Cu cation</name>
        <dbReference type="ChEBI" id="CHEBI:23378"/>
        <label>A</label>
    </ligand>
</feature>
<feature type="binding site" evidence="1">
    <location>
        <position position="353"/>
    </location>
    <ligand>
        <name>Cu cation</name>
        <dbReference type="ChEBI" id="CHEBI:23378"/>
        <label>B</label>
    </ligand>
</feature>
<feature type="binding site" evidence="1">
    <location>
        <position position="357"/>
    </location>
    <ligand>
        <name>Cu cation</name>
        <dbReference type="ChEBI" id="CHEBI:23378"/>
        <label>B</label>
    </ligand>
</feature>
<feature type="binding site" evidence="1">
    <location>
        <position position="393"/>
    </location>
    <ligand>
        <name>Cu cation</name>
        <dbReference type="ChEBI" id="CHEBI:23378"/>
        <label>B</label>
    </ligand>
</feature>
<feature type="glycosylation site" description="N-linked (GlcNAc...) asparagine" evidence="3">
    <location>
        <position position="318"/>
    </location>
</feature>
<feature type="disulfide bond" evidence="1">
    <location>
        <begin position="562"/>
        <end position="609"/>
    </location>
</feature>
<feature type="sequence conflict" description="In Ref. 1; AA sequence." evidence="3" ref="1">
    <original>C</original>
    <variation>E</variation>
    <location>
        <position position="21"/>
    </location>
</feature>
<sequence length="659" mass="75565">MVAKWCVLAMCLLVAVGADKCPRATDQEAKQKRMLEVLQHVNKPYVAETKDPKIPAGSEDVFKHLGILEKHEVFSLFDERQWDEATTAAVYMLTAPSFDEFIDRAEIVRHRINEDMFYYAFSVAAVHRDDTRGINLPRIHEIYPDKFLKHKVIVEVKNSINSGQEDPLIDATHEFTDLRDPNSKLHYFLEDVGLNSHHYHWHVIHPAVWQESLEELTHQHKDRKGELFYFMHHQMVNRYDAERLSNGLPRSTTFENWNDPIETGYAPHLTIDRTGYRYQFRPDNLVVRDLPELTKNHMRQWRDRILYAVHRGEALAANGSSVSLRDERGIDVLGNMVESSLQSINRPFYGNVHCYAHVIAARIADPDGKYGEDNGAMYDVATSARDPLFYQWHKFIDNLFHEYKDALKAYSSEDLTYNDITIEEVNVQGEGGSPANTVTTFLENSIVHLDEGFSFTARGHARVKVQHLQHEGFNYQIKVNNAGGEHKVVFRVFLAPKYDEEHHEFDFNEQRGMAIELDKFVATVPAGSSTVEQHSSKSSVTQSNDNFYGSSATRSSENHCSCGWPDYLLIPKGNHQGVQFNVYVIATSYDEDHVESDESCHCGDSLSYCGALYDKYPDRRPMGYPFDRHADAQTFDEFKTKNMNSVTVTIKHTGEVKDA</sequence>
<organism evidence="4">
    <name type="scientific">Scutigera coleoptrata</name>
    <name type="common">House centipede</name>
    <dbReference type="NCBI Taxonomy" id="29022"/>
    <lineage>
        <taxon>Eukaryota</taxon>
        <taxon>Metazoa</taxon>
        <taxon>Ecdysozoa</taxon>
        <taxon>Arthropoda</taxon>
        <taxon>Myriapoda</taxon>
        <taxon>Chilopoda</taxon>
        <taxon>Notostigmophora</taxon>
        <taxon>Scutigeromorpha</taxon>
        <taxon>Scutigeridae</taxon>
        <taxon>Scutigera</taxon>
    </lineage>
</organism>
<evidence type="ECO:0000250" key="1">
    <source>
        <dbReference type="UniProtKB" id="P10787"/>
    </source>
</evidence>
<evidence type="ECO:0000269" key="2">
    <source>
    </source>
</evidence>
<evidence type="ECO:0000305" key="3"/>
<evidence type="ECO:0000312" key="4">
    <source>
        <dbReference type="EMBL" id="CAD55132.1"/>
    </source>
</evidence>
<keyword id="KW-0186">Copper</keyword>
<keyword id="KW-0903">Direct protein sequencing</keyword>
<keyword id="KW-1015">Disulfide bond</keyword>
<keyword id="KW-0325">Glycoprotein</keyword>
<keyword id="KW-0479">Metal-binding</keyword>
<keyword id="KW-0561">Oxygen transport</keyword>
<keyword id="KW-0964">Secreted</keyword>
<keyword id="KW-0732">Signal</keyword>
<keyword id="KW-0813">Transport</keyword>
<protein>
    <recommendedName>
        <fullName>Hemocyanin subunit B</fullName>
    </recommendedName>
</protein>
<accession>Q8IFJ8</accession>